<proteinExistence type="evidence at transcript level"/>
<evidence type="ECO:0000250" key="1"/>
<evidence type="ECO:0000255" key="2"/>
<evidence type="ECO:0000255" key="3">
    <source>
        <dbReference type="PROSITE-ProRule" id="PRU00192"/>
    </source>
</evidence>
<evidence type="ECO:0000305" key="4"/>
<reference key="1">
    <citation type="journal article" date="1994" name="Cancer Res.">
        <title>Cloning of a novel malignant melanoma-derived growth-regulatory protein, MIA.</title>
        <authorList>
            <person name="Blesch A."/>
            <person name="Bosserhoff A.-K."/>
            <person name="Apfel R."/>
            <person name="Behl C."/>
            <person name="Hessdoerfer B."/>
            <person name="Schmitt A."/>
            <person name="Jachimczak P."/>
            <person name="Lottspeich F."/>
            <person name="Buettner R."/>
            <person name="Bogdahn U."/>
        </authorList>
    </citation>
    <scope>NUCLEOTIDE SEQUENCE [MRNA]</scope>
    <source>
        <strain>BALB/cJ</strain>
    </source>
</reference>
<reference key="2">
    <citation type="journal article" date="1997" name="Dev. Dyn.">
        <title>Mouse CD-RAP/MIA gene: structure, chromosomal localization, and expression in cartilage and chondrosarcoma.</title>
        <authorList>
            <person name="Bosserhoff A.K."/>
            <person name="Kondo S."/>
            <person name="Moser M."/>
            <person name="Dietz U."/>
            <person name="Copeland N.G."/>
            <person name="Gilbert D.J."/>
            <person name="Jenkins N.A."/>
            <person name="Buettner R."/>
            <person name="Sandell L.J."/>
        </authorList>
    </citation>
    <scope>NUCLEOTIDE SEQUENCE [GENOMIC DNA / MRNA]</scope>
    <source>
        <strain>129/Sv</strain>
    </source>
</reference>
<organism>
    <name type="scientific">Mus musculus</name>
    <name type="common">Mouse</name>
    <dbReference type="NCBI Taxonomy" id="10090"/>
    <lineage>
        <taxon>Eukaryota</taxon>
        <taxon>Metazoa</taxon>
        <taxon>Chordata</taxon>
        <taxon>Craniata</taxon>
        <taxon>Vertebrata</taxon>
        <taxon>Euteleostomi</taxon>
        <taxon>Mammalia</taxon>
        <taxon>Eutheria</taxon>
        <taxon>Euarchontoglires</taxon>
        <taxon>Glires</taxon>
        <taxon>Rodentia</taxon>
        <taxon>Myomorpha</taxon>
        <taxon>Muroidea</taxon>
        <taxon>Muridae</taxon>
        <taxon>Murinae</taxon>
        <taxon>Mus</taxon>
        <taxon>Mus</taxon>
    </lineage>
</organism>
<name>MIA_MOUSE</name>
<sequence length="130" mass="14593">MVWSPVLLGIVVLSVFSGPSRADRAMPKLADWKLCADEECSHPISMAVALQDYVAPDCRFLTIYRGQVVYVFSKLKGRGRLFWGGSVQGGYYGDLAARLGYFPSSIVREDLTLKPGKIDMKTDQWDFYCQ</sequence>
<protein>
    <recommendedName>
        <fullName>Melanoma-derived growth regulatory protein</fullName>
    </recommendedName>
    <alternativeName>
        <fullName>Cartilage-derived retinoic acid-sensitive protein</fullName>
        <shortName>CD-RAP</shortName>
    </alternativeName>
    <alternativeName>
        <fullName>Melanoma inhibitory activity protein</fullName>
    </alternativeName>
</protein>
<comment type="function">
    <text evidence="1">Elicits growth inhibition on melanoma cells in vitro as well as some other neuroectodermal tumors, including gliomas.</text>
</comment>
<comment type="subunit">
    <text evidence="1">Interacts with FASLG.</text>
</comment>
<comment type="subcellular location">
    <subcellularLocation>
        <location>Secreted</location>
    </subcellularLocation>
</comment>
<comment type="tissue specificity">
    <text>All malignant melanoma cell lines tested and infrequently in glioma cell lines.</text>
</comment>
<comment type="PTM">
    <text>May possess two intramolecular disulfide bonds.</text>
</comment>
<comment type="similarity">
    <text evidence="4">Belongs to the MIA/OTOR family.</text>
</comment>
<gene>
    <name type="primary">Mia</name>
    <name type="synonym">Cdrap</name>
    <name type="synonym">Mia1</name>
</gene>
<accession>Q61865</accession>
<accession>O09086</accession>
<accession>P97495</accession>
<dbReference type="EMBL" id="X94322">
    <property type="protein sequence ID" value="CAA63983.1"/>
    <property type="molecule type" value="mRNA"/>
</dbReference>
<dbReference type="EMBL" id="U85612">
    <property type="protein sequence ID" value="AAB42082.1"/>
    <property type="molecule type" value="Genomic_DNA"/>
</dbReference>
<dbReference type="EMBL" id="X97965">
    <property type="protein sequence ID" value="CAA66608.1"/>
    <property type="molecule type" value="Genomic_DNA"/>
</dbReference>
<dbReference type="CCDS" id="CCDS21013.1"/>
<dbReference type="RefSeq" id="NP_062267.2">
    <property type="nucleotide sequence ID" value="NM_019394.3"/>
</dbReference>
<dbReference type="SMR" id="Q61865"/>
<dbReference type="FunCoup" id="Q61865">
    <property type="interactions" value="339"/>
</dbReference>
<dbReference type="STRING" id="10090.ENSMUSP00000071876"/>
<dbReference type="PhosphoSitePlus" id="Q61865"/>
<dbReference type="PaxDb" id="10090-ENSMUSP00000114063"/>
<dbReference type="ProteomicsDB" id="293476"/>
<dbReference type="DNASU" id="12587"/>
<dbReference type="Ensembl" id="ENSMUST00000071986.13">
    <property type="protein sequence ID" value="ENSMUSP00000071876.7"/>
    <property type="gene ID" value="ENSMUSG00000089661.10"/>
</dbReference>
<dbReference type="GeneID" id="12587"/>
<dbReference type="KEGG" id="mmu:12587"/>
<dbReference type="UCSC" id="uc009fvf.2">
    <property type="organism name" value="mouse"/>
</dbReference>
<dbReference type="AGR" id="MGI:109615"/>
<dbReference type="CTD" id="8190"/>
<dbReference type="MGI" id="MGI:109615">
    <property type="gene designation" value="Mia"/>
</dbReference>
<dbReference type="VEuPathDB" id="HostDB:ENSMUSG00000089661"/>
<dbReference type="eggNOG" id="ENOG502S2XN">
    <property type="taxonomic scope" value="Eukaryota"/>
</dbReference>
<dbReference type="GeneTree" id="ENSGT00950000182767"/>
<dbReference type="HOGENOM" id="CLU_158739_0_0_1"/>
<dbReference type="InParanoid" id="Q61865"/>
<dbReference type="OMA" id="VVQENQY"/>
<dbReference type="OrthoDB" id="19010at9989"/>
<dbReference type="BioGRID-ORCS" id="12587">
    <property type="hits" value="0 hits in 76 CRISPR screens"/>
</dbReference>
<dbReference type="ChiTaRS" id="Mia">
    <property type="organism name" value="mouse"/>
</dbReference>
<dbReference type="PRO" id="PR:Q61865"/>
<dbReference type="Proteomes" id="UP000000589">
    <property type="component" value="Chromosome 7"/>
</dbReference>
<dbReference type="RNAct" id="Q61865">
    <property type="molecule type" value="protein"/>
</dbReference>
<dbReference type="Bgee" id="ENSMUSG00000089661">
    <property type="expression patterns" value="Expressed in endochondral bone and 122 other cell types or tissues"/>
</dbReference>
<dbReference type="ExpressionAtlas" id="Q61865">
    <property type="expression patterns" value="baseline and differential"/>
</dbReference>
<dbReference type="GO" id="GO:0005576">
    <property type="term" value="C:extracellular region"/>
    <property type="evidence" value="ECO:0000304"/>
    <property type="project" value="MGI"/>
</dbReference>
<dbReference type="GO" id="GO:0008083">
    <property type="term" value="F:growth factor activity"/>
    <property type="evidence" value="ECO:0007669"/>
    <property type="project" value="UniProtKB-KW"/>
</dbReference>
<dbReference type="GO" id="GO:0007160">
    <property type="term" value="P:cell-matrix adhesion"/>
    <property type="evidence" value="ECO:0000315"/>
    <property type="project" value="MGI"/>
</dbReference>
<dbReference type="GO" id="GO:0030198">
    <property type="term" value="P:extracellular matrix organization"/>
    <property type="evidence" value="ECO:0000315"/>
    <property type="project" value="MGI"/>
</dbReference>
<dbReference type="FunFam" id="2.30.30.40:FF:000175">
    <property type="entry name" value="Melanoma-derived growth regulatory protein"/>
    <property type="match status" value="1"/>
</dbReference>
<dbReference type="Gene3D" id="2.30.30.40">
    <property type="entry name" value="SH3 Domains"/>
    <property type="match status" value="1"/>
</dbReference>
<dbReference type="InterPro" id="IPR043369">
    <property type="entry name" value="MIA"/>
</dbReference>
<dbReference type="InterPro" id="IPR036028">
    <property type="entry name" value="SH3-like_dom_sf"/>
</dbReference>
<dbReference type="InterPro" id="IPR001452">
    <property type="entry name" value="SH3_domain"/>
</dbReference>
<dbReference type="PANTHER" id="PTHR47312">
    <property type="entry name" value="MELANOMA-DERIVED GROWTH REGULATORY PROTEIN"/>
    <property type="match status" value="1"/>
</dbReference>
<dbReference type="PANTHER" id="PTHR47312:SF1">
    <property type="entry name" value="MELANOMA-DERIVED GROWTH REGULATORY PROTEIN"/>
    <property type="match status" value="1"/>
</dbReference>
<dbReference type="Pfam" id="PF07653">
    <property type="entry name" value="SH3_2"/>
    <property type="match status" value="1"/>
</dbReference>
<dbReference type="SMART" id="SM00326">
    <property type="entry name" value="SH3"/>
    <property type="match status" value="1"/>
</dbReference>
<dbReference type="SUPFAM" id="SSF50044">
    <property type="entry name" value="SH3-domain"/>
    <property type="match status" value="1"/>
</dbReference>
<dbReference type="PROSITE" id="PS50002">
    <property type="entry name" value="SH3"/>
    <property type="match status" value="1"/>
</dbReference>
<keyword id="KW-1015">Disulfide bond</keyword>
<keyword id="KW-0339">Growth factor</keyword>
<keyword id="KW-1185">Reference proteome</keyword>
<keyword id="KW-0964">Secreted</keyword>
<keyword id="KW-0728">SH3 domain</keyword>
<keyword id="KW-0732">Signal</keyword>
<feature type="signal peptide" evidence="2">
    <location>
        <begin position="1"/>
        <end position="22"/>
    </location>
</feature>
<feature type="chain" id="PRO_0000019029" description="Melanoma-derived growth regulatory protein">
    <location>
        <begin position="23"/>
        <end position="130"/>
    </location>
</feature>
<feature type="domain" description="SH3" evidence="3">
    <location>
        <begin position="42"/>
        <end position="112"/>
    </location>
</feature>
<feature type="disulfide bond" evidence="1">
    <location>
        <begin position="35"/>
        <end position="40"/>
    </location>
</feature>
<feature type="disulfide bond" evidence="1">
    <location>
        <begin position="58"/>
        <end position="129"/>
    </location>
</feature>
<feature type="sequence conflict" description="In Ref. 1; CAA63983." evidence="4" ref="1">
    <original>TL</original>
    <variation>NS</variation>
    <location>
        <begin position="112"/>
        <end position="113"/>
    </location>
</feature>